<dbReference type="EC" id="4.2.1.9" evidence="1"/>
<dbReference type="EMBL" id="CP000857">
    <property type="protein sequence ID" value="ACN48084.1"/>
    <property type="molecule type" value="Genomic_DNA"/>
</dbReference>
<dbReference type="RefSeq" id="WP_001127444.1">
    <property type="nucleotide sequence ID" value="NC_012125.1"/>
</dbReference>
<dbReference type="SMR" id="C0Q2U8"/>
<dbReference type="KEGG" id="sei:SPC_4017"/>
<dbReference type="HOGENOM" id="CLU_014271_4_2_6"/>
<dbReference type="UniPathway" id="UPA00047">
    <property type="reaction ID" value="UER00057"/>
</dbReference>
<dbReference type="UniPathway" id="UPA00049">
    <property type="reaction ID" value="UER00061"/>
</dbReference>
<dbReference type="Proteomes" id="UP000001599">
    <property type="component" value="Chromosome"/>
</dbReference>
<dbReference type="GO" id="GO:0005829">
    <property type="term" value="C:cytosol"/>
    <property type="evidence" value="ECO:0007669"/>
    <property type="project" value="TreeGrafter"/>
</dbReference>
<dbReference type="GO" id="GO:0051537">
    <property type="term" value="F:2 iron, 2 sulfur cluster binding"/>
    <property type="evidence" value="ECO:0007669"/>
    <property type="project" value="UniProtKB-UniRule"/>
</dbReference>
<dbReference type="GO" id="GO:0004160">
    <property type="term" value="F:dihydroxy-acid dehydratase activity"/>
    <property type="evidence" value="ECO:0007669"/>
    <property type="project" value="UniProtKB-UniRule"/>
</dbReference>
<dbReference type="GO" id="GO:0000287">
    <property type="term" value="F:magnesium ion binding"/>
    <property type="evidence" value="ECO:0007669"/>
    <property type="project" value="UniProtKB-UniRule"/>
</dbReference>
<dbReference type="GO" id="GO:0009097">
    <property type="term" value="P:isoleucine biosynthetic process"/>
    <property type="evidence" value="ECO:0007669"/>
    <property type="project" value="UniProtKB-UniRule"/>
</dbReference>
<dbReference type="GO" id="GO:0009099">
    <property type="term" value="P:L-valine biosynthetic process"/>
    <property type="evidence" value="ECO:0007669"/>
    <property type="project" value="UniProtKB-UniRule"/>
</dbReference>
<dbReference type="FunFam" id="3.50.30.80:FF:000001">
    <property type="entry name" value="Dihydroxy-acid dehydratase"/>
    <property type="match status" value="1"/>
</dbReference>
<dbReference type="Gene3D" id="3.50.30.80">
    <property type="entry name" value="IlvD/EDD C-terminal domain-like"/>
    <property type="match status" value="1"/>
</dbReference>
<dbReference type="HAMAP" id="MF_00012">
    <property type="entry name" value="IlvD"/>
    <property type="match status" value="1"/>
</dbReference>
<dbReference type="InterPro" id="IPR042096">
    <property type="entry name" value="Dihydro-acid_dehy_C"/>
</dbReference>
<dbReference type="InterPro" id="IPR004404">
    <property type="entry name" value="DihydroxyA_deHydtase"/>
</dbReference>
<dbReference type="InterPro" id="IPR020558">
    <property type="entry name" value="DiOHA_6PGluconate_deHydtase_CS"/>
</dbReference>
<dbReference type="InterPro" id="IPR056740">
    <property type="entry name" value="ILV_EDD_C"/>
</dbReference>
<dbReference type="InterPro" id="IPR000581">
    <property type="entry name" value="ILV_EDD_N"/>
</dbReference>
<dbReference type="InterPro" id="IPR037237">
    <property type="entry name" value="IlvD/EDD_N"/>
</dbReference>
<dbReference type="NCBIfam" id="TIGR00110">
    <property type="entry name" value="ilvD"/>
    <property type="match status" value="1"/>
</dbReference>
<dbReference type="NCBIfam" id="NF009103">
    <property type="entry name" value="PRK12448.1"/>
    <property type="match status" value="1"/>
</dbReference>
<dbReference type="PANTHER" id="PTHR43661">
    <property type="entry name" value="D-XYLONATE DEHYDRATASE"/>
    <property type="match status" value="1"/>
</dbReference>
<dbReference type="PANTHER" id="PTHR43661:SF3">
    <property type="entry name" value="D-XYLONATE DEHYDRATASE YAGF-RELATED"/>
    <property type="match status" value="1"/>
</dbReference>
<dbReference type="Pfam" id="PF24877">
    <property type="entry name" value="ILV_EDD_C"/>
    <property type="match status" value="1"/>
</dbReference>
<dbReference type="Pfam" id="PF00920">
    <property type="entry name" value="ILVD_EDD_N"/>
    <property type="match status" value="1"/>
</dbReference>
<dbReference type="SUPFAM" id="SSF143975">
    <property type="entry name" value="IlvD/EDD N-terminal domain-like"/>
    <property type="match status" value="1"/>
</dbReference>
<dbReference type="SUPFAM" id="SSF52016">
    <property type="entry name" value="LeuD/IlvD-like"/>
    <property type="match status" value="1"/>
</dbReference>
<dbReference type="PROSITE" id="PS00886">
    <property type="entry name" value="ILVD_EDD_1"/>
    <property type="match status" value="1"/>
</dbReference>
<dbReference type="PROSITE" id="PS00887">
    <property type="entry name" value="ILVD_EDD_2"/>
    <property type="match status" value="1"/>
</dbReference>
<keyword id="KW-0001">2Fe-2S</keyword>
<keyword id="KW-0028">Amino-acid biosynthesis</keyword>
<keyword id="KW-0100">Branched-chain amino acid biosynthesis</keyword>
<keyword id="KW-0408">Iron</keyword>
<keyword id="KW-0411">Iron-sulfur</keyword>
<keyword id="KW-0456">Lyase</keyword>
<keyword id="KW-0460">Magnesium</keyword>
<keyword id="KW-0479">Metal-binding</keyword>
<reference key="1">
    <citation type="journal article" date="2009" name="PLoS ONE">
        <title>Salmonella paratyphi C: genetic divergence from Salmonella choleraesuis and pathogenic convergence with Salmonella typhi.</title>
        <authorList>
            <person name="Liu W.-Q."/>
            <person name="Feng Y."/>
            <person name="Wang Y."/>
            <person name="Zou Q.-H."/>
            <person name="Chen F."/>
            <person name="Guo J.-T."/>
            <person name="Peng Y.-H."/>
            <person name="Jin Y."/>
            <person name="Li Y.-G."/>
            <person name="Hu S.-N."/>
            <person name="Johnston R.N."/>
            <person name="Liu G.-R."/>
            <person name="Liu S.-L."/>
        </authorList>
    </citation>
    <scope>NUCLEOTIDE SEQUENCE [LARGE SCALE GENOMIC DNA]</scope>
    <source>
        <strain>RKS4594</strain>
    </source>
</reference>
<evidence type="ECO:0000255" key="1">
    <source>
        <dbReference type="HAMAP-Rule" id="MF_00012"/>
    </source>
</evidence>
<comment type="function">
    <text evidence="1">Functions in the biosynthesis of branched-chain amino acids. Catalyzes the dehydration of (2R,3R)-2,3-dihydroxy-3-methylpentanoate (2,3-dihydroxy-3-methylvalerate) into 2-oxo-3-methylpentanoate (2-oxo-3-methylvalerate) and of (2R)-2,3-dihydroxy-3-methylbutanoate (2,3-dihydroxyisovalerate) into 2-oxo-3-methylbutanoate (2-oxoisovalerate), the penultimate precursor to L-isoleucine and L-valine, respectively.</text>
</comment>
<comment type="catalytic activity">
    <reaction evidence="1">
        <text>(2R)-2,3-dihydroxy-3-methylbutanoate = 3-methyl-2-oxobutanoate + H2O</text>
        <dbReference type="Rhea" id="RHEA:24809"/>
        <dbReference type="ChEBI" id="CHEBI:11851"/>
        <dbReference type="ChEBI" id="CHEBI:15377"/>
        <dbReference type="ChEBI" id="CHEBI:49072"/>
        <dbReference type="EC" id="4.2.1.9"/>
    </reaction>
    <physiologicalReaction direction="left-to-right" evidence="1">
        <dbReference type="Rhea" id="RHEA:24810"/>
    </physiologicalReaction>
</comment>
<comment type="catalytic activity">
    <reaction evidence="1">
        <text>(2R,3R)-2,3-dihydroxy-3-methylpentanoate = (S)-3-methyl-2-oxopentanoate + H2O</text>
        <dbReference type="Rhea" id="RHEA:27694"/>
        <dbReference type="ChEBI" id="CHEBI:15377"/>
        <dbReference type="ChEBI" id="CHEBI:35146"/>
        <dbReference type="ChEBI" id="CHEBI:49258"/>
        <dbReference type="EC" id="4.2.1.9"/>
    </reaction>
    <physiologicalReaction direction="left-to-right" evidence="1">
        <dbReference type="Rhea" id="RHEA:27695"/>
    </physiologicalReaction>
</comment>
<comment type="cofactor">
    <cofactor evidence="1">
        <name>[2Fe-2S] cluster</name>
        <dbReference type="ChEBI" id="CHEBI:190135"/>
    </cofactor>
    <text evidence="1">Binds 1 [2Fe-2S] cluster per subunit. This cluster acts as a Lewis acid cofactor.</text>
</comment>
<comment type="cofactor">
    <cofactor evidence="1">
        <name>Mg(2+)</name>
        <dbReference type="ChEBI" id="CHEBI:18420"/>
    </cofactor>
</comment>
<comment type="pathway">
    <text evidence="1">Amino-acid biosynthesis; L-isoleucine biosynthesis; L-isoleucine from 2-oxobutanoate: step 3/4.</text>
</comment>
<comment type="pathway">
    <text evidence="1">Amino-acid biosynthesis; L-valine biosynthesis; L-valine from pyruvate: step 3/4.</text>
</comment>
<comment type="subunit">
    <text evidence="1">Homodimer.</text>
</comment>
<comment type="similarity">
    <text evidence="1">Belongs to the IlvD/Edd family.</text>
</comment>
<accession>C0Q2U8</accession>
<feature type="chain" id="PRO_1000116525" description="Dihydroxy-acid dehydratase">
    <location>
        <begin position="1"/>
        <end position="616"/>
    </location>
</feature>
<feature type="active site" description="Proton acceptor" evidence="1">
    <location>
        <position position="517"/>
    </location>
</feature>
<feature type="binding site" evidence="1">
    <location>
        <position position="81"/>
    </location>
    <ligand>
        <name>Mg(2+)</name>
        <dbReference type="ChEBI" id="CHEBI:18420"/>
    </ligand>
</feature>
<feature type="binding site" evidence="1">
    <location>
        <position position="122"/>
    </location>
    <ligand>
        <name>[2Fe-2S] cluster</name>
        <dbReference type="ChEBI" id="CHEBI:190135"/>
    </ligand>
</feature>
<feature type="binding site" evidence="1">
    <location>
        <position position="123"/>
    </location>
    <ligand>
        <name>Mg(2+)</name>
        <dbReference type="ChEBI" id="CHEBI:18420"/>
    </ligand>
</feature>
<feature type="binding site" description="via carbamate group" evidence="1">
    <location>
        <position position="124"/>
    </location>
    <ligand>
        <name>Mg(2+)</name>
        <dbReference type="ChEBI" id="CHEBI:18420"/>
    </ligand>
</feature>
<feature type="binding site" evidence="1">
    <location>
        <position position="195"/>
    </location>
    <ligand>
        <name>[2Fe-2S] cluster</name>
        <dbReference type="ChEBI" id="CHEBI:190135"/>
    </ligand>
</feature>
<feature type="binding site" evidence="1">
    <location>
        <position position="491"/>
    </location>
    <ligand>
        <name>Mg(2+)</name>
        <dbReference type="ChEBI" id="CHEBI:18420"/>
    </ligand>
</feature>
<feature type="modified residue" description="N6-carboxylysine" evidence="1">
    <location>
        <position position="124"/>
    </location>
</feature>
<name>ILVD_SALPC</name>
<gene>
    <name evidence="1" type="primary">ilvD</name>
    <name type="ordered locus">SPC_4017</name>
</gene>
<sequence length="616" mass="65743">MPKYRSATTTHGRNMAGARALWRATGMTDSDFGKPIIAVVNSFTQFVPGHVHLRDLGKLVAEQIEASGGVAKEFNTIAVDDGIAMGHGGMLYSLPSRELIADSVEYMVNAHCADAMVCISNCDKITPGMLMASLRLNIPVIFVSGGPMEAGKTKLSDQIIKLDLVDAMIQGADPKVSDDQSNQVERSACPTCGSCSGMFTANSMNCLTEALGLSQPGNGSLLATHADRKQLFLNAGKRIVELTKRYYEQNDESALPRNIANKAAFENAMTLDIAMGGSTNTVLHLLAAAQEAEIDFTMSDIDKLSRKVPQLCKVAPSTQKYHMEDVHRAGGVLGILGELDRAGLLNRNVKNVLGLTLPQTLEQYDITVTQDEAVKKMFRAGPAGIRTTQAFSQDCRWDSLDDDRAAGCIRSLEYAYSKDGGLAVLYGNFAENGCIVKTAGVDDSILKFTGPAKVYESQDEAVEAILGGKVVEGDVVVIRYEGPKGGPGMQEMLYPTSFLKSMGLGKACALITDGRFSGGTSGLSIGHVSPEAASGGTIALIEDGDTIAIDIPNRSIQLQLSEAEIAARREAQEARGDKAWTPKNRQRQVSFALRAYASLATSADKGAVRDKSKLGG</sequence>
<organism>
    <name type="scientific">Salmonella paratyphi C (strain RKS4594)</name>
    <dbReference type="NCBI Taxonomy" id="476213"/>
    <lineage>
        <taxon>Bacteria</taxon>
        <taxon>Pseudomonadati</taxon>
        <taxon>Pseudomonadota</taxon>
        <taxon>Gammaproteobacteria</taxon>
        <taxon>Enterobacterales</taxon>
        <taxon>Enterobacteriaceae</taxon>
        <taxon>Salmonella</taxon>
    </lineage>
</organism>
<protein>
    <recommendedName>
        <fullName evidence="1">Dihydroxy-acid dehydratase</fullName>
        <shortName evidence="1">DAD</shortName>
        <ecNumber evidence="1">4.2.1.9</ecNumber>
    </recommendedName>
</protein>
<proteinExistence type="inferred from homology"/>